<dbReference type="EC" id="7.1.1.-" evidence="1"/>
<dbReference type="EMBL" id="CP001164">
    <property type="protein sequence ID" value="ACI38561.1"/>
    <property type="molecule type" value="Genomic_DNA"/>
</dbReference>
<dbReference type="RefSeq" id="WP_000118507.1">
    <property type="nucleotide sequence ID" value="NC_011353.1"/>
</dbReference>
<dbReference type="SMR" id="B5YXS2"/>
<dbReference type="GeneID" id="93774892"/>
<dbReference type="KEGG" id="ecf:ECH74115_3421"/>
<dbReference type="HOGENOM" id="CLU_015134_0_1_6"/>
<dbReference type="GO" id="GO:0005886">
    <property type="term" value="C:plasma membrane"/>
    <property type="evidence" value="ECO:0007669"/>
    <property type="project" value="UniProtKB-SubCell"/>
</dbReference>
<dbReference type="GO" id="GO:0003954">
    <property type="term" value="F:NADH dehydrogenase activity"/>
    <property type="evidence" value="ECO:0007669"/>
    <property type="project" value="TreeGrafter"/>
</dbReference>
<dbReference type="GO" id="GO:0016655">
    <property type="term" value="F:oxidoreductase activity, acting on NAD(P)H, quinone or similar compound as acceptor"/>
    <property type="evidence" value="ECO:0007669"/>
    <property type="project" value="UniProtKB-UniRule"/>
</dbReference>
<dbReference type="GO" id="GO:0048038">
    <property type="term" value="F:quinone binding"/>
    <property type="evidence" value="ECO:0007669"/>
    <property type="project" value="UniProtKB-KW"/>
</dbReference>
<dbReference type="GO" id="GO:0009060">
    <property type="term" value="P:aerobic respiration"/>
    <property type="evidence" value="ECO:0007669"/>
    <property type="project" value="TreeGrafter"/>
</dbReference>
<dbReference type="HAMAP" id="MF_01350">
    <property type="entry name" value="NDH1_NuoH"/>
    <property type="match status" value="1"/>
</dbReference>
<dbReference type="InterPro" id="IPR001694">
    <property type="entry name" value="NADH_UbQ_OxRdtase_su1/FPO"/>
</dbReference>
<dbReference type="InterPro" id="IPR018086">
    <property type="entry name" value="NADH_UbQ_OxRdtase_su1_CS"/>
</dbReference>
<dbReference type="NCBIfam" id="NF004740">
    <property type="entry name" value="PRK06076.1-1"/>
    <property type="match status" value="1"/>
</dbReference>
<dbReference type="NCBIfam" id="NF004741">
    <property type="entry name" value="PRK06076.1-2"/>
    <property type="match status" value="1"/>
</dbReference>
<dbReference type="PANTHER" id="PTHR11432">
    <property type="entry name" value="NADH DEHYDROGENASE SUBUNIT 1"/>
    <property type="match status" value="1"/>
</dbReference>
<dbReference type="PANTHER" id="PTHR11432:SF3">
    <property type="entry name" value="NADH-UBIQUINONE OXIDOREDUCTASE CHAIN 1"/>
    <property type="match status" value="1"/>
</dbReference>
<dbReference type="Pfam" id="PF00146">
    <property type="entry name" value="NADHdh"/>
    <property type="match status" value="1"/>
</dbReference>
<dbReference type="PROSITE" id="PS00667">
    <property type="entry name" value="COMPLEX1_ND1_1"/>
    <property type="match status" value="1"/>
</dbReference>
<dbReference type="PROSITE" id="PS00668">
    <property type="entry name" value="COMPLEX1_ND1_2"/>
    <property type="match status" value="1"/>
</dbReference>
<keyword id="KW-0997">Cell inner membrane</keyword>
<keyword id="KW-1003">Cell membrane</keyword>
<keyword id="KW-0472">Membrane</keyword>
<keyword id="KW-0520">NAD</keyword>
<keyword id="KW-0874">Quinone</keyword>
<keyword id="KW-1278">Translocase</keyword>
<keyword id="KW-0812">Transmembrane</keyword>
<keyword id="KW-1133">Transmembrane helix</keyword>
<keyword id="KW-0830">Ubiquinone</keyword>
<name>NUOH_ECO5E</name>
<organism>
    <name type="scientific">Escherichia coli O157:H7 (strain EC4115 / EHEC)</name>
    <dbReference type="NCBI Taxonomy" id="444450"/>
    <lineage>
        <taxon>Bacteria</taxon>
        <taxon>Pseudomonadati</taxon>
        <taxon>Pseudomonadota</taxon>
        <taxon>Gammaproteobacteria</taxon>
        <taxon>Enterobacterales</taxon>
        <taxon>Enterobacteriaceae</taxon>
        <taxon>Escherichia</taxon>
    </lineage>
</organism>
<sequence>MSWISPELIEILLTILKAVVILLVVVTCGAFMSFGERRLLGLFQNRYGPNRVGWGGSLQLVADMIKMFFKEDWIPKFSDRVIFTLAPMIAFTSLLLAFAIVPVSPGWVVADLNIGILFFLMMAGLAVYAVLFAGWSSNNKYSLLGAMRASAQTLSYEVFLGLSLMGVVAQAGSFNMTDIVNSQAHVWNVIPQFFGFITFAIAGVAVCHRHPFDQPEAEQELADGYHIEYSGMKFGLFFVGEYIGIVTISALMVTLFFGGWQGPLLPPFIWFALKTAFFMMMFILIRASLPRPRYDQVMSFGWKICLPLTLINLLVTAAVILWQAQ</sequence>
<gene>
    <name evidence="1" type="primary">nuoH</name>
    <name type="ordered locus">ECH74115_3421</name>
</gene>
<evidence type="ECO:0000255" key="1">
    <source>
        <dbReference type="HAMAP-Rule" id="MF_01350"/>
    </source>
</evidence>
<comment type="function">
    <text evidence="1">NDH-1 shuttles electrons from NADH, via FMN and iron-sulfur (Fe-S) centers, to quinones in the respiratory chain. The immediate electron acceptor for the enzyme in this species is believed to be ubiquinone. Couples the redox reaction to proton translocation (for every two electrons transferred, four hydrogen ions are translocated across the cytoplasmic membrane), and thus conserves the redox energy in a proton gradient. This subunit may bind ubiquinone.</text>
</comment>
<comment type="catalytic activity">
    <reaction evidence="1">
        <text>a quinone + NADH + 5 H(+)(in) = a quinol + NAD(+) + 4 H(+)(out)</text>
        <dbReference type="Rhea" id="RHEA:57888"/>
        <dbReference type="ChEBI" id="CHEBI:15378"/>
        <dbReference type="ChEBI" id="CHEBI:24646"/>
        <dbReference type="ChEBI" id="CHEBI:57540"/>
        <dbReference type="ChEBI" id="CHEBI:57945"/>
        <dbReference type="ChEBI" id="CHEBI:132124"/>
    </reaction>
</comment>
<comment type="subunit">
    <text evidence="1">NDH-1 is composed of 13 different subunits. Subunits NuoA, H, J, K, L, M, N constitute the membrane sector of the complex.</text>
</comment>
<comment type="subcellular location">
    <subcellularLocation>
        <location evidence="1">Cell inner membrane</location>
        <topology evidence="1">Multi-pass membrane protein</topology>
    </subcellularLocation>
</comment>
<comment type="similarity">
    <text evidence="1">Belongs to the complex I subunit 1 family.</text>
</comment>
<accession>B5YXS2</accession>
<reference key="1">
    <citation type="journal article" date="2011" name="Proc. Natl. Acad. Sci. U.S.A.">
        <title>Genomic anatomy of Escherichia coli O157:H7 outbreaks.</title>
        <authorList>
            <person name="Eppinger M."/>
            <person name="Mammel M.K."/>
            <person name="Leclerc J.E."/>
            <person name="Ravel J."/>
            <person name="Cebula T.A."/>
        </authorList>
    </citation>
    <scope>NUCLEOTIDE SEQUENCE [LARGE SCALE GENOMIC DNA]</scope>
    <source>
        <strain>EC4115 / EHEC</strain>
    </source>
</reference>
<proteinExistence type="inferred from homology"/>
<feature type="chain" id="PRO_1000143591" description="NADH-quinone oxidoreductase subunit H">
    <location>
        <begin position="1"/>
        <end position="325"/>
    </location>
</feature>
<feature type="transmembrane region" description="Helical" evidence="1">
    <location>
        <begin position="11"/>
        <end position="31"/>
    </location>
</feature>
<feature type="transmembrane region" description="Helical" evidence="1">
    <location>
        <begin position="81"/>
        <end position="101"/>
    </location>
</feature>
<feature type="transmembrane region" description="Helical" evidence="1">
    <location>
        <begin position="114"/>
        <end position="134"/>
    </location>
</feature>
<feature type="transmembrane region" description="Helical" evidence="1">
    <location>
        <begin position="154"/>
        <end position="174"/>
    </location>
</feature>
<feature type="transmembrane region" description="Helical" evidence="1">
    <location>
        <begin position="186"/>
        <end position="206"/>
    </location>
</feature>
<feature type="transmembrane region" description="Helical" evidence="1">
    <location>
        <begin position="237"/>
        <end position="257"/>
    </location>
</feature>
<feature type="transmembrane region" description="Helical" evidence="1">
    <location>
        <begin position="265"/>
        <end position="285"/>
    </location>
</feature>
<feature type="transmembrane region" description="Helical" evidence="1">
    <location>
        <begin position="304"/>
        <end position="324"/>
    </location>
</feature>
<protein>
    <recommendedName>
        <fullName evidence="1">NADH-quinone oxidoreductase subunit H</fullName>
        <ecNumber evidence="1">7.1.1.-</ecNumber>
    </recommendedName>
    <alternativeName>
        <fullName evidence="1">NADH dehydrogenase I subunit H</fullName>
    </alternativeName>
    <alternativeName>
        <fullName evidence="1">NDH-1 subunit H</fullName>
    </alternativeName>
</protein>